<feature type="chain" id="PRO_0000320823" description="Protein translocase subunit SecA">
    <location>
        <begin position="1"/>
        <end position="905"/>
    </location>
</feature>
<feature type="region of interest" description="Disordered" evidence="2">
    <location>
        <begin position="565"/>
        <end position="584"/>
    </location>
</feature>
<feature type="binding site" evidence="1">
    <location>
        <position position="87"/>
    </location>
    <ligand>
        <name>ATP</name>
        <dbReference type="ChEBI" id="CHEBI:30616"/>
    </ligand>
</feature>
<feature type="binding site" evidence="1">
    <location>
        <begin position="105"/>
        <end position="109"/>
    </location>
    <ligand>
        <name>ATP</name>
        <dbReference type="ChEBI" id="CHEBI:30616"/>
    </ligand>
</feature>
<feature type="binding site" evidence="1">
    <location>
        <position position="512"/>
    </location>
    <ligand>
        <name>ATP</name>
        <dbReference type="ChEBI" id="CHEBI:30616"/>
    </ligand>
</feature>
<feature type="binding site" evidence="1">
    <location>
        <position position="886"/>
    </location>
    <ligand>
        <name>Zn(2+)</name>
        <dbReference type="ChEBI" id="CHEBI:29105"/>
    </ligand>
</feature>
<feature type="binding site" evidence="1">
    <location>
        <position position="888"/>
    </location>
    <ligand>
        <name>Zn(2+)</name>
        <dbReference type="ChEBI" id="CHEBI:29105"/>
    </ligand>
</feature>
<feature type="binding site" evidence="1">
    <location>
        <position position="897"/>
    </location>
    <ligand>
        <name>Zn(2+)</name>
        <dbReference type="ChEBI" id="CHEBI:29105"/>
    </ligand>
</feature>
<feature type="binding site" evidence="1">
    <location>
        <position position="898"/>
    </location>
    <ligand>
        <name>Zn(2+)</name>
        <dbReference type="ChEBI" id="CHEBI:29105"/>
    </ligand>
</feature>
<evidence type="ECO:0000255" key="1">
    <source>
        <dbReference type="HAMAP-Rule" id="MF_01382"/>
    </source>
</evidence>
<evidence type="ECO:0000256" key="2">
    <source>
        <dbReference type="SAM" id="MobiDB-lite"/>
    </source>
</evidence>
<name>SECA_HAEDU</name>
<accession>Q7VKT3</accession>
<gene>
    <name evidence="1" type="primary">secA</name>
    <name type="ordered locus">HD_1788</name>
</gene>
<sequence>MISKIITSIFGSSNDRTLKRLKKRVVHINKLEAEFEKLSDQELQAKTAEFKQRLAEGATLDSLLHEAFATVREASRRVMGMRHFDVQLIGGMVLTNRNIAEMRTGEGKTLTATLPCYLNALMGKGVHVVTVNDYLARRDAETNRPLFEFLGMTVAVNIAGLASEVKREAYNADITYSTNSELGFDYLRDNLAHTKEERFQRELYYALVDEVDSILIDEARTPLIISGPAEDTTQIYQAIDTIIPHLISQDKEDSDEYTGEGDFTLDLKNKQAHLTERGMVKVEGILTEMGLMQEGETLYHPARIALLHHVYAALRAHKLFEVDVDYIVKDGEVVIIDEHTGRTMAGRRWSDGLHQAIEAKEHVNIQGENQTVASITYQNYFRLYEKLAGMTGTADTEAFEFQQIYGLDTVVIPTNKPVIRDDRTDLMFKSEQEKFAAIIKGIEECMSRQQPVLVGTASVEKSELLSNALTKAGIKHNVLNAKFHAQEAEIVAEAGAPSAVTIATNMAGRGTDIVLGGNWKAELAKLDNPTEAEIEAIKSAWKTRYDTVMQAGGLHIIGTERHESRRIDNQLRGRSGRQGDPGSSRFYLSLDDTLMRIYLNEGKLNMMRKAFSEEGEAMESKLLTKVIASAQAKVEAHNFEGRKNLLQYDDVANEQRKAIYEQRNYLLETNDISAMIETIRDDVFNHVISRYIPPQSIEEMWDIAGLEEVLHHQFGMELPIQQWLEKEKDLHEETLRERIINLAKQEYQSKEEKVGAEVMRNFEKGVMLQNLDELWKEHLSAMDYLRKGIHLRGYAQKDPKQEYKKESFEMFTNMLELLKSNVISILSRIQVRSQQEIEEAQRQQHEQAEAESANYQATTEEALAKEKRDALPAELTNLQIGRNDPCPCGSGKKYKHCHGSKARYV</sequence>
<keyword id="KW-0067">ATP-binding</keyword>
<keyword id="KW-0997">Cell inner membrane</keyword>
<keyword id="KW-1003">Cell membrane</keyword>
<keyword id="KW-0963">Cytoplasm</keyword>
<keyword id="KW-0472">Membrane</keyword>
<keyword id="KW-0479">Metal-binding</keyword>
<keyword id="KW-0547">Nucleotide-binding</keyword>
<keyword id="KW-0653">Protein transport</keyword>
<keyword id="KW-1185">Reference proteome</keyword>
<keyword id="KW-1278">Translocase</keyword>
<keyword id="KW-0811">Translocation</keyword>
<keyword id="KW-0813">Transport</keyword>
<keyword id="KW-0862">Zinc</keyword>
<reference key="1">
    <citation type="submission" date="2003-06" db="EMBL/GenBank/DDBJ databases">
        <title>The complete genome sequence of Haemophilus ducreyi.</title>
        <authorList>
            <person name="Munson R.S. Jr."/>
            <person name="Ray W.C."/>
            <person name="Mahairas G."/>
            <person name="Sabo P."/>
            <person name="Mungur R."/>
            <person name="Johnson L."/>
            <person name="Nguyen D."/>
            <person name="Wang J."/>
            <person name="Forst C."/>
            <person name="Hood L."/>
        </authorList>
    </citation>
    <scope>NUCLEOTIDE SEQUENCE [LARGE SCALE GENOMIC DNA]</scope>
    <source>
        <strain>35000HP / ATCC 700724</strain>
    </source>
</reference>
<dbReference type="EC" id="7.4.2.8" evidence="1"/>
<dbReference type="EMBL" id="AE017143">
    <property type="protein sequence ID" value="AAP96539.1"/>
    <property type="molecule type" value="Genomic_DNA"/>
</dbReference>
<dbReference type="RefSeq" id="WP_010945568.1">
    <property type="nucleotide sequence ID" value="NC_002940.2"/>
</dbReference>
<dbReference type="SMR" id="Q7VKT3"/>
<dbReference type="STRING" id="233412.HD_1788"/>
<dbReference type="KEGG" id="hdu:HD_1788"/>
<dbReference type="eggNOG" id="COG0653">
    <property type="taxonomic scope" value="Bacteria"/>
</dbReference>
<dbReference type="HOGENOM" id="CLU_005314_3_0_6"/>
<dbReference type="OrthoDB" id="9805579at2"/>
<dbReference type="Proteomes" id="UP000001022">
    <property type="component" value="Chromosome"/>
</dbReference>
<dbReference type="GO" id="GO:0031522">
    <property type="term" value="C:cell envelope Sec protein transport complex"/>
    <property type="evidence" value="ECO:0007669"/>
    <property type="project" value="TreeGrafter"/>
</dbReference>
<dbReference type="GO" id="GO:0005829">
    <property type="term" value="C:cytosol"/>
    <property type="evidence" value="ECO:0007669"/>
    <property type="project" value="TreeGrafter"/>
</dbReference>
<dbReference type="GO" id="GO:0005886">
    <property type="term" value="C:plasma membrane"/>
    <property type="evidence" value="ECO:0007669"/>
    <property type="project" value="UniProtKB-SubCell"/>
</dbReference>
<dbReference type="GO" id="GO:0005524">
    <property type="term" value="F:ATP binding"/>
    <property type="evidence" value="ECO:0007669"/>
    <property type="project" value="UniProtKB-UniRule"/>
</dbReference>
<dbReference type="GO" id="GO:0046872">
    <property type="term" value="F:metal ion binding"/>
    <property type="evidence" value="ECO:0007669"/>
    <property type="project" value="UniProtKB-KW"/>
</dbReference>
<dbReference type="GO" id="GO:0008564">
    <property type="term" value="F:protein-exporting ATPase activity"/>
    <property type="evidence" value="ECO:0007669"/>
    <property type="project" value="UniProtKB-EC"/>
</dbReference>
<dbReference type="GO" id="GO:0065002">
    <property type="term" value="P:intracellular protein transmembrane transport"/>
    <property type="evidence" value="ECO:0007669"/>
    <property type="project" value="UniProtKB-UniRule"/>
</dbReference>
<dbReference type="GO" id="GO:0017038">
    <property type="term" value="P:protein import"/>
    <property type="evidence" value="ECO:0007669"/>
    <property type="project" value="InterPro"/>
</dbReference>
<dbReference type="GO" id="GO:0006605">
    <property type="term" value="P:protein targeting"/>
    <property type="evidence" value="ECO:0007669"/>
    <property type="project" value="UniProtKB-UniRule"/>
</dbReference>
<dbReference type="GO" id="GO:0043952">
    <property type="term" value="P:protein transport by the Sec complex"/>
    <property type="evidence" value="ECO:0007669"/>
    <property type="project" value="TreeGrafter"/>
</dbReference>
<dbReference type="CDD" id="cd17928">
    <property type="entry name" value="DEXDc_SecA"/>
    <property type="match status" value="1"/>
</dbReference>
<dbReference type="CDD" id="cd18803">
    <property type="entry name" value="SF2_C_secA"/>
    <property type="match status" value="1"/>
</dbReference>
<dbReference type="FunFam" id="3.40.50.300:FF:000113">
    <property type="entry name" value="Preprotein translocase subunit SecA"/>
    <property type="match status" value="1"/>
</dbReference>
<dbReference type="FunFam" id="3.90.1440.10:FF:000001">
    <property type="entry name" value="Preprotein translocase subunit SecA"/>
    <property type="match status" value="1"/>
</dbReference>
<dbReference type="FunFam" id="1.10.3060.10:FF:000003">
    <property type="entry name" value="Protein translocase subunit SecA"/>
    <property type="match status" value="1"/>
</dbReference>
<dbReference type="Gene3D" id="1.10.3060.10">
    <property type="entry name" value="Helical scaffold and wing domains of SecA"/>
    <property type="match status" value="1"/>
</dbReference>
<dbReference type="Gene3D" id="3.40.50.300">
    <property type="entry name" value="P-loop containing nucleotide triphosphate hydrolases"/>
    <property type="match status" value="2"/>
</dbReference>
<dbReference type="Gene3D" id="3.90.1440.10">
    <property type="entry name" value="SecA, preprotein cross-linking domain"/>
    <property type="match status" value="1"/>
</dbReference>
<dbReference type="HAMAP" id="MF_01382">
    <property type="entry name" value="SecA"/>
    <property type="match status" value="1"/>
</dbReference>
<dbReference type="InterPro" id="IPR014001">
    <property type="entry name" value="Helicase_ATP-bd"/>
</dbReference>
<dbReference type="InterPro" id="IPR001650">
    <property type="entry name" value="Helicase_C-like"/>
</dbReference>
<dbReference type="InterPro" id="IPR027417">
    <property type="entry name" value="P-loop_NTPase"/>
</dbReference>
<dbReference type="InterPro" id="IPR004027">
    <property type="entry name" value="SEC_C_motif"/>
</dbReference>
<dbReference type="InterPro" id="IPR000185">
    <property type="entry name" value="SecA"/>
</dbReference>
<dbReference type="InterPro" id="IPR020937">
    <property type="entry name" value="SecA_CS"/>
</dbReference>
<dbReference type="InterPro" id="IPR011115">
    <property type="entry name" value="SecA_DEAD"/>
</dbReference>
<dbReference type="InterPro" id="IPR014018">
    <property type="entry name" value="SecA_motor_DEAD"/>
</dbReference>
<dbReference type="InterPro" id="IPR011130">
    <property type="entry name" value="SecA_preprotein_X-link_dom"/>
</dbReference>
<dbReference type="InterPro" id="IPR044722">
    <property type="entry name" value="SecA_SF2_C"/>
</dbReference>
<dbReference type="InterPro" id="IPR011116">
    <property type="entry name" value="SecA_Wing/Scaffold"/>
</dbReference>
<dbReference type="InterPro" id="IPR036266">
    <property type="entry name" value="SecA_Wing/Scaffold_sf"/>
</dbReference>
<dbReference type="InterPro" id="IPR036670">
    <property type="entry name" value="SecA_X-link_sf"/>
</dbReference>
<dbReference type="NCBIfam" id="NF009538">
    <property type="entry name" value="PRK12904.1"/>
    <property type="match status" value="1"/>
</dbReference>
<dbReference type="NCBIfam" id="TIGR00963">
    <property type="entry name" value="secA"/>
    <property type="match status" value="1"/>
</dbReference>
<dbReference type="PANTHER" id="PTHR30612:SF0">
    <property type="entry name" value="CHLOROPLAST PROTEIN-TRANSPORTING ATPASE"/>
    <property type="match status" value="1"/>
</dbReference>
<dbReference type="PANTHER" id="PTHR30612">
    <property type="entry name" value="SECA INNER MEMBRANE COMPONENT OF SEC PROTEIN SECRETION SYSTEM"/>
    <property type="match status" value="1"/>
</dbReference>
<dbReference type="Pfam" id="PF21090">
    <property type="entry name" value="P-loop_SecA"/>
    <property type="match status" value="1"/>
</dbReference>
<dbReference type="Pfam" id="PF02810">
    <property type="entry name" value="SEC-C"/>
    <property type="match status" value="1"/>
</dbReference>
<dbReference type="Pfam" id="PF07517">
    <property type="entry name" value="SecA_DEAD"/>
    <property type="match status" value="1"/>
</dbReference>
<dbReference type="Pfam" id="PF01043">
    <property type="entry name" value="SecA_PP_bind"/>
    <property type="match status" value="1"/>
</dbReference>
<dbReference type="Pfam" id="PF07516">
    <property type="entry name" value="SecA_SW"/>
    <property type="match status" value="1"/>
</dbReference>
<dbReference type="PRINTS" id="PR00906">
    <property type="entry name" value="SECA"/>
</dbReference>
<dbReference type="SMART" id="SM00957">
    <property type="entry name" value="SecA_DEAD"/>
    <property type="match status" value="1"/>
</dbReference>
<dbReference type="SMART" id="SM00958">
    <property type="entry name" value="SecA_PP_bind"/>
    <property type="match status" value="1"/>
</dbReference>
<dbReference type="SUPFAM" id="SSF81886">
    <property type="entry name" value="Helical scaffold and wing domains of SecA"/>
    <property type="match status" value="1"/>
</dbReference>
<dbReference type="SUPFAM" id="SSF52540">
    <property type="entry name" value="P-loop containing nucleoside triphosphate hydrolases"/>
    <property type="match status" value="2"/>
</dbReference>
<dbReference type="SUPFAM" id="SSF81767">
    <property type="entry name" value="Pre-protein crosslinking domain of SecA"/>
    <property type="match status" value="1"/>
</dbReference>
<dbReference type="PROSITE" id="PS01312">
    <property type="entry name" value="SECA"/>
    <property type="match status" value="1"/>
</dbReference>
<dbReference type="PROSITE" id="PS51196">
    <property type="entry name" value="SECA_MOTOR_DEAD"/>
    <property type="match status" value="1"/>
</dbReference>
<organism>
    <name type="scientific">Haemophilus ducreyi (strain 35000HP / ATCC 700724)</name>
    <dbReference type="NCBI Taxonomy" id="233412"/>
    <lineage>
        <taxon>Bacteria</taxon>
        <taxon>Pseudomonadati</taxon>
        <taxon>Pseudomonadota</taxon>
        <taxon>Gammaproteobacteria</taxon>
        <taxon>Pasteurellales</taxon>
        <taxon>Pasteurellaceae</taxon>
        <taxon>Haemophilus</taxon>
    </lineage>
</organism>
<protein>
    <recommendedName>
        <fullName evidence="1">Protein translocase subunit SecA</fullName>
        <ecNumber evidence="1">7.4.2.8</ecNumber>
    </recommendedName>
</protein>
<proteinExistence type="inferred from homology"/>
<comment type="function">
    <text evidence="1">Part of the Sec protein translocase complex. Interacts with the SecYEG preprotein conducting channel. Has a central role in coupling the hydrolysis of ATP to the transfer of proteins into and across the cell membrane, serving both as a receptor for the preprotein-SecB complex and as an ATP-driven molecular motor driving the stepwise translocation of polypeptide chains across the membrane.</text>
</comment>
<comment type="catalytic activity">
    <reaction evidence="1">
        <text>ATP + H2O + cellular proteinSide 1 = ADP + phosphate + cellular proteinSide 2.</text>
        <dbReference type="EC" id="7.4.2.8"/>
    </reaction>
</comment>
<comment type="cofactor">
    <cofactor evidence="1">
        <name>Zn(2+)</name>
        <dbReference type="ChEBI" id="CHEBI:29105"/>
    </cofactor>
    <text evidence="1">May bind 1 zinc ion per subunit.</text>
</comment>
<comment type="subunit">
    <text evidence="1">Monomer and homodimer. Part of the essential Sec protein translocation apparatus which comprises SecA, SecYEG and auxiliary proteins SecDF-YajC and YidC.</text>
</comment>
<comment type="subcellular location">
    <subcellularLocation>
        <location evidence="1">Cell inner membrane</location>
        <topology evidence="1">Peripheral membrane protein</topology>
        <orientation evidence="1">Cytoplasmic side</orientation>
    </subcellularLocation>
    <subcellularLocation>
        <location evidence="1">Cytoplasm</location>
    </subcellularLocation>
    <text evidence="1">Distribution is 50-50.</text>
</comment>
<comment type="similarity">
    <text evidence="1">Belongs to the SecA family.</text>
</comment>